<evidence type="ECO:0000250" key="1"/>
<evidence type="ECO:0000255" key="2">
    <source>
        <dbReference type="PROSITE-ProRule" id="PRU01082"/>
    </source>
</evidence>
<evidence type="ECO:0000256" key="3">
    <source>
        <dbReference type="SAM" id="MobiDB-lite"/>
    </source>
</evidence>
<evidence type="ECO:0000305" key="4"/>
<comment type="catalytic activity">
    <reaction>
        <text>O-phospho-L-seryl-[protein] + H2O = L-seryl-[protein] + phosphate</text>
        <dbReference type="Rhea" id="RHEA:20629"/>
        <dbReference type="Rhea" id="RHEA-COMP:9863"/>
        <dbReference type="Rhea" id="RHEA-COMP:11604"/>
        <dbReference type="ChEBI" id="CHEBI:15377"/>
        <dbReference type="ChEBI" id="CHEBI:29999"/>
        <dbReference type="ChEBI" id="CHEBI:43474"/>
        <dbReference type="ChEBI" id="CHEBI:83421"/>
        <dbReference type="EC" id="3.1.3.16"/>
    </reaction>
</comment>
<comment type="catalytic activity">
    <reaction>
        <text>O-phospho-L-threonyl-[protein] + H2O = L-threonyl-[protein] + phosphate</text>
        <dbReference type="Rhea" id="RHEA:47004"/>
        <dbReference type="Rhea" id="RHEA-COMP:11060"/>
        <dbReference type="Rhea" id="RHEA-COMP:11605"/>
        <dbReference type="ChEBI" id="CHEBI:15377"/>
        <dbReference type="ChEBI" id="CHEBI:30013"/>
        <dbReference type="ChEBI" id="CHEBI:43474"/>
        <dbReference type="ChEBI" id="CHEBI:61977"/>
        <dbReference type="EC" id="3.1.3.16"/>
    </reaction>
</comment>
<comment type="cofactor">
    <cofactor evidence="1">
        <name>Mg(2+)</name>
        <dbReference type="ChEBI" id="CHEBI:18420"/>
    </cofactor>
    <cofactor evidence="1">
        <name>Mn(2+)</name>
        <dbReference type="ChEBI" id="CHEBI:29035"/>
    </cofactor>
    <text evidence="1">Binds 2 magnesium or manganese ions per subunit.</text>
</comment>
<comment type="similarity">
    <text evidence="4">Belongs to the PP2C family.</text>
</comment>
<comment type="sequence caution" evidence="4">
    <conflict type="erroneous gene model prediction">
        <sequence resource="EMBL-CDS" id="BAF09296"/>
    </conflict>
</comment>
<keyword id="KW-0378">Hydrolase</keyword>
<keyword id="KW-0460">Magnesium</keyword>
<keyword id="KW-0464">Manganese</keyword>
<keyword id="KW-0479">Metal-binding</keyword>
<keyword id="KW-0904">Protein phosphatase</keyword>
<keyword id="KW-1185">Reference proteome</keyword>
<feature type="chain" id="PRO_0000363267" description="Probable protein phosphatase 2C 21">
    <location>
        <begin position="1"/>
        <end position="340"/>
    </location>
</feature>
<feature type="domain" description="PPM-type phosphatase" evidence="2">
    <location>
        <begin position="24"/>
        <end position="305"/>
    </location>
</feature>
<feature type="region of interest" description="Disordered" evidence="3">
    <location>
        <begin position="1"/>
        <end position="21"/>
    </location>
</feature>
<feature type="region of interest" description="Disordered" evidence="3">
    <location>
        <begin position="311"/>
        <end position="340"/>
    </location>
</feature>
<feature type="compositionally biased region" description="Basic and acidic residues" evidence="3">
    <location>
        <begin position="316"/>
        <end position="340"/>
    </location>
</feature>
<feature type="binding site" evidence="1">
    <location>
        <position position="58"/>
    </location>
    <ligand>
        <name>Mn(2+)</name>
        <dbReference type="ChEBI" id="CHEBI:29035"/>
        <label>1</label>
    </ligand>
</feature>
<feature type="binding site" evidence="1">
    <location>
        <position position="58"/>
    </location>
    <ligand>
        <name>Mn(2+)</name>
        <dbReference type="ChEBI" id="CHEBI:29035"/>
        <label>2</label>
    </ligand>
</feature>
<feature type="binding site" evidence="1">
    <location>
        <position position="59"/>
    </location>
    <ligand>
        <name>Mn(2+)</name>
        <dbReference type="ChEBI" id="CHEBI:29035"/>
        <label>1</label>
    </ligand>
</feature>
<feature type="binding site" evidence="1">
    <location>
        <position position="254"/>
    </location>
    <ligand>
        <name>Mn(2+)</name>
        <dbReference type="ChEBI" id="CHEBI:29035"/>
        <label>2</label>
    </ligand>
</feature>
<feature type="binding site" evidence="1">
    <location>
        <position position="296"/>
    </location>
    <ligand>
        <name>Mn(2+)</name>
        <dbReference type="ChEBI" id="CHEBI:29035"/>
        <label>2</label>
    </ligand>
</feature>
<reference key="1">
    <citation type="journal article" date="2005" name="Nature">
        <title>The map-based sequence of the rice genome.</title>
        <authorList>
            <consortium name="International rice genome sequencing project (IRGSP)"/>
        </authorList>
    </citation>
    <scope>NUCLEOTIDE SEQUENCE [LARGE SCALE GENOMIC DNA]</scope>
    <source>
        <strain>cv. Nipponbare</strain>
    </source>
</reference>
<reference key="2">
    <citation type="journal article" date="2008" name="Nucleic Acids Res.">
        <title>The rice annotation project database (RAP-DB): 2008 update.</title>
        <authorList>
            <consortium name="The rice annotation project (RAP)"/>
        </authorList>
    </citation>
    <scope>GENOME REANNOTATION</scope>
    <source>
        <strain>cv. Nipponbare</strain>
    </source>
</reference>
<reference key="3">
    <citation type="journal article" date="2013" name="Rice">
        <title>Improvement of the Oryza sativa Nipponbare reference genome using next generation sequence and optical map data.</title>
        <authorList>
            <person name="Kawahara Y."/>
            <person name="de la Bastide M."/>
            <person name="Hamilton J.P."/>
            <person name="Kanamori H."/>
            <person name="McCombie W.R."/>
            <person name="Ouyang S."/>
            <person name="Schwartz D.C."/>
            <person name="Tanaka T."/>
            <person name="Wu J."/>
            <person name="Zhou S."/>
            <person name="Childs K.L."/>
            <person name="Davidson R.M."/>
            <person name="Lin H."/>
            <person name="Quesada-Ocampo L."/>
            <person name="Vaillancourt B."/>
            <person name="Sakai H."/>
            <person name="Lee S.S."/>
            <person name="Kim J."/>
            <person name="Numa H."/>
            <person name="Itoh T."/>
            <person name="Buell C.R."/>
            <person name="Matsumoto T."/>
        </authorList>
    </citation>
    <scope>GENOME REANNOTATION</scope>
    <source>
        <strain>cv. Nipponbare</strain>
    </source>
</reference>
<reference key="4">
    <citation type="journal article" date="2005" name="PLoS Biol.">
        <title>The genomes of Oryza sativa: a history of duplications.</title>
        <authorList>
            <person name="Yu J."/>
            <person name="Wang J."/>
            <person name="Lin W."/>
            <person name="Li S."/>
            <person name="Li H."/>
            <person name="Zhou J."/>
            <person name="Ni P."/>
            <person name="Dong W."/>
            <person name="Hu S."/>
            <person name="Zeng C."/>
            <person name="Zhang J."/>
            <person name="Zhang Y."/>
            <person name="Li R."/>
            <person name="Xu Z."/>
            <person name="Li S."/>
            <person name="Li X."/>
            <person name="Zheng H."/>
            <person name="Cong L."/>
            <person name="Lin L."/>
            <person name="Yin J."/>
            <person name="Geng J."/>
            <person name="Li G."/>
            <person name="Shi J."/>
            <person name="Liu J."/>
            <person name="Lv H."/>
            <person name="Li J."/>
            <person name="Wang J."/>
            <person name="Deng Y."/>
            <person name="Ran L."/>
            <person name="Shi X."/>
            <person name="Wang X."/>
            <person name="Wu Q."/>
            <person name="Li C."/>
            <person name="Ren X."/>
            <person name="Wang J."/>
            <person name="Wang X."/>
            <person name="Li D."/>
            <person name="Liu D."/>
            <person name="Zhang X."/>
            <person name="Ji Z."/>
            <person name="Zhao W."/>
            <person name="Sun Y."/>
            <person name="Zhang Z."/>
            <person name="Bao J."/>
            <person name="Han Y."/>
            <person name="Dong L."/>
            <person name="Ji J."/>
            <person name="Chen P."/>
            <person name="Wu S."/>
            <person name="Liu J."/>
            <person name="Xiao Y."/>
            <person name="Bu D."/>
            <person name="Tan J."/>
            <person name="Yang L."/>
            <person name="Ye C."/>
            <person name="Zhang J."/>
            <person name="Xu J."/>
            <person name="Zhou Y."/>
            <person name="Yu Y."/>
            <person name="Zhang B."/>
            <person name="Zhuang S."/>
            <person name="Wei H."/>
            <person name="Liu B."/>
            <person name="Lei M."/>
            <person name="Yu H."/>
            <person name="Li Y."/>
            <person name="Xu H."/>
            <person name="Wei S."/>
            <person name="He X."/>
            <person name="Fang L."/>
            <person name="Zhang Z."/>
            <person name="Zhang Y."/>
            <person name="Huang X."/>
            <person name="Su Z."/>
            <person name="Tong W."/>
            <person name="Li J."/>
            <person name="Tong Z."/>
            <person name="Li S."/>
            <person name="Ye J."/>
            <person name="Wang L."/>
            <person name="Fang L."/>
            <person name="Lei T."/>
            <person name="Chen C.-S."/>
            <person name="Chen H.-C."/>
            <person name="Xu Z."/>
            <person name="Li H."/>
            <person name="Huang H."/>
            <person name="Zhang F."/>
            <person name="Xu H."/>
            <person name="Li N."/>
            <person name="Zhao C."/>
            <person name="Li S."/>
            <person name="Dong L."/>
            <person name="Huang Y."/>
            <person name="Li L."/>
            <person name="Xi Y."/>
            <person name="Qi Q."/>
            <person name="Li W."/>
            <person name="Zhang B."/>
            <person name="Hu W."/>
            <person name="Zhang Y."/>
            <person name="Tian X."/>
            <person name="Jiao Y."/>
            <person name="Liang X."/>
            <person name="Jin J."/>
            <person name="Gao L."/>
            <person name="Zheng W."/>
            <person name="Hao B."/>
            <person name="Liu S.-M."/>
            <person name="Wang W."/>
            <person name="Yuan L."/>
            <person name="Cao M."/>
            <person name="McDermott J."/>
            <person name="Samudrala R."/>
            <person name="Wang J."/>
            <person name="Wong G.K.-S."/>
            <person name="Yang H."/>
        </authorList>
    </citation>
    <scope>NUCLEOTIDE SEQUENCE [LARGE SCALE GENOMIC DNA]</scope>
    <source>
        <strain>cv. Nipponbare</strain>
    </source>
</reference>
<reference key="5">
    <citation type="journal article" date="2003" name="Science">
        <title>Collection, mapping, and annotation of over 28,000 cDNA clones from japonica rice.</title>
        <authorList>
            <consortium name="The rice full-length cDNA consortium"/>
        </authorList>
    </citation>
    <scope>NUCLEOTIDE SEQUENCE [LARGE SCALE MRNA]</scope>
    <source>
        <strain>cv. Nipponbare</strain>
    </source>
</reference>
<reference key="6">
    <citation type="journal article" date="2008" name="BMC Genomics">
        <title>Genome-wide and expression analysis of protein phosphatase 2C in rice and Arabidopsis.</title>
        <authorList>
            <person name="Xue T."/>
            <person name="Wang D."/>
            <person name="Zhang S."/>
            <person name="Ehlting J."/>
            <person name="Ni F."/>
            <person name="Jacab S."/>
            <person name="Zheng C."/>
            <person name="Zhong Y."/>
        </authorList>
    </citation>
    <scope>GENE FAMILY</scope>
    <scope>NOMENCLATURE</scope>
</reference>
<protein>
    <recommendedName>
        <fullName>Probable protein phosphatase 2C 21</fullName>
        <shortName>OsPP2C21</shortName>
        <ecNumber>3.1.3.16</ecNumber>
    </recommendedName>
</protein>
<gene>
    <name type="ordered locus">Os02g0606900</name>
    <name type="ordered locus">LOC_Os02g39410</name>
    <name type="ORF">OsJ_007234</name>
    <name type="ORF">OsJ_07456</name>
</gene>
<proteinExistence type="evidence at transcript level"/>
<organism>
    <name type="scientific">Oryza sativa subsp. japonica</name>
    <name type="common">Rice</name>
    <dbReference type="NCBI Taxonomy" id="39947"/>
    <lineage>
        <taxon>Eukaryota</taxon>
        <taxon>Viridiplantae</taxon>
        <taxon>Streptophyta</taxon>
        <taxon>Embryophyta</taxon>
        <taxon>Tracheophyta</taxon>
        <taxon>Spermatophyta</taxon>
        <taxon>Magnoliopsida</taxon>
        <taxon>Liliopsida</taxon>
        <taxon>Poales</taxon>
        <taxon>Poaceae</taxon>
        <taxon>BOP clade</taxon>
        <taxon>Oryzoideae</taxon>
        <taxon>Oryzeae</taxon>
        <taxon>Oryzinae</taxon>
        <taxon>Oryza</taxon>
        <taxon>Oryza sativa</taxon>
    </lineage>
</organism>
<name>P2C21_ORYSJ</name>
<dbReference type="EC" id="3.1.3.16"/>
<dbReference type="EMBL" id="AP008208">
    <property type="protein sequence ID" value="BAF09296.2"/>
    <property type="status" value="ALT_SEQ"/>
    <property type="molecule type" value="Genomic_DNA"/>
</dbReference>
<dbReference type="EMBL" id="AP014958">
    <property type="protein sequence ID" value="BAS79668.1"/>
    <property type="molecule type" value="Genomic_DNA"/>
</dbReference>
<dbReference type="EMBL" id="CM000139">
    <property type="protein sequence ID" value="EEE57337.1"/>
    <property type="molecule type" value="Genomic_DNA"/>
</dbReference>
<dbReference type="EMBL" id="AK072375">
    <property type="protein sequence ID" value="BAG92943.1"/>
    <property type="molecule type" value="mRNA"/>
</dbReference>
<dbReference type="RefSeq" id="XP_015623227.1">
    <property type="nucleotide sequence ID" value="XM_015767741.1"/>
</dbReference>
<dbReference type="SMR" id="A3A8W2"/>
<dbReference type="FunCoup" id="A3A8W2">
    <property type="interactions" value="17"/>
</dbReference>
<dbReference type="STRING" id="39947.A3A8W2"/>
<dbReference type="PaxDb" id="39947-A3A8W2"/>
<dbReference type="EnsemblPlants" id="Os02t0606900-01">
    <property type="protein sequence ID" value="Os02t0606900-01"/>
    <property type="gene ID" value="Os02g0606900"/>
</dbReference>
<dbReference type="Gramene" id="Os02t0606900-01">
    <property type="protein sequence ID" value="Os02t0606900-01"/>
    <property type="gene ID" value="Os02g0606900"/>
</dbReference>
<dbReference type="KEGG" id="dosa:Os02g0606900"/>
<dbReference type="eggNOG" id="KOG0698">
    <property type="taxonomic scope" value="Eukaryota"/>
</dbReference>
<dbReference type="InParanoid" id="A3A8W2"/>
<dbReference type="OMA" id="HKMARQD"/>
<dbReference type="OrthoDB" id="10264738at2759"/>
<dbReference type="Proteomes" id="UP000000763">
    <property type="component" value="Chromosome 2"/>
</dbReference>
<dbReference type="Proteomes" id="UP000007752">
    <property type="component" value="Chromosome 2"/>
</dbReference>
<dbReference type="Proteomes" id="UP000059680">
    <property type="component" value="Chromosome 2"/>
</dbReference>
<dbReference type="ExpressionAtlas" id="A3A8W2">
    <property type="expression patterns" value="baseline and differential"/>
</dbReference>
<dbReference type="GO" id="GO:0046872">
    <property type="term" value="F:metal ion binding"/>
    <property type="evidence" value="ECO:0007669"/>
    <property type="project" value="UniProtKB-KW"/>
</dbReference>
<dbReference type="GO" id="GO:0004722">
    <property type="term" value="F:protein serine/threonine phosphatase activity"/>
    <property type="evidence" value="ECO:0007669"/>
    <property type="project" value="UniProtKB-EC"/>
</dbReference>
<dbReference type="GO" id="GO:0007165">
    <property type="term" value="P:signal transduction"/>
    <property type="evidence" value="ECO:0000318"/>
    <property type="project" value="GO_Central"/>
</dbReference>
<dbReference type="CDD" id="cd00143">
    <property type="entry name" value="PP2Cc"/>
    <property type="match status" value="1"/>
</dbReference>
<dbReference type="FunFam" id="3.60.40.10:FF:000056">
    <property type="entry name" value="Probable protein phosphatase 2C 18"/>
    <property type="match status" value="1"/>
</dbReference>
<dbReference type="Gene3D" id="3.60.40.10">
    <property type="entry name" value="PPM-type phosphatase domain"/>
    <property type="match status" value="1"/>
</dbReference>
<dbReference type="InterPro" id="IPR015655">
    <property type="entry name" value="PP2C"/>
</dbReference>
<dbReference type="InterPro" id="IPR000222">
    <property type="entry name" value="PP2C_BS"/>
</dbReference>
<dbReference type="InterPro" id="IPR036457">
    <property type="entry name" value="PPM-type-like_dom_sf"/>
</dbReference>
<dbReference type="InterPro" id="IPR001932">
    <property type="entry name" value="PPM-type_phosphatase-like_dom"/>
</dbReference>
<dbReference type="PANTHER" id="PTHR47992">
    <property type="entry name" value="PROTEIN PHOSPHATASE"/>
    <property type="match status" value="1"/>
</dbReference>
<dbReference type="Pfam" id="PF00481">
    <property type="entry name" value="PP2C"/>
    <property type="match status" value="1"/>
</dbReference>
<dbReference type="SMART" id="SM00331">
    <property type="entry name" value="PP2C_SIG"/>
    <property type="match status" value="1"/>
</dbReference>
<dbReference type="SMART" id="SM00332">
    <property type="entry name" value="PP2Cc"/>
    <property type="match status" value="1"/>
</dbReference>
<dbReference type="SUPFAM" id="SSF81606">
    <property type="entry name" value="PP2C-like"/>
    <property type="match status" value="1"/>
</dbReference>
<dbReference type="PROSITE" id="PS01032">
    <property type="entry name" value="PPM_1"/>
    <property type="match status" value="1"/>
</dbReference>
<dbReference type="PROSITE" id="PS51746">
    <property type="entry name" value="PPM_2"/>
    <property type="match status" value="1"/>
</dbReference>
<sequence>MGASPSRPLEQSPSSSEGENHRVKYASYTTQGFRPHMEDALAVELDLDATTSFFGVYDGHGGAEVAMYCAKRFHTMLLEDVDYINNLPNAITSVCFRLDDDLQRSNEWRESLNPCANRNCLTNICANLHHFTEDYVPPSYEGSTACVVIIRGNQIIVGNVGDSRCVLSKNGQAISLSFDHKPHHEAERERIQRAGGHVFLQRILGMLATSRAIGDFAYKQNRNMPPSQQMVTCVPDIRVENITDDTEFLVIASDGVWDGMRNNNVVQFVRQELRPGEENLRETCEKLVGHCLHSNDNATAILVKFKPIEEDPDEVASARDEHQHNPEGGDEKLDINNDND</sequence>
<accession>A3A8W2</accession>
<accession>A0A0P0VLH1</accession>
<accession>B7EKP6</accession>
<accession>Q0DZP2</accession>